<keyword id="KW-0963">Cytoplasm</keyword>
<keyword id="KW-0275">Fatty acid biosynthesis</keyword>
<keyword id="KW-0276">Fatty acid metabolism</keyword>
<keyword id="KW-0444">Lipid biosynthesis</keyword>
<keyword id="KW-0443">Lipid metabolism</keyword>
<keyword id="KW-0460">Magnesium</keyword>
<keyword id="KW-0479">Metal-binding</keyword>
<keyword id="KW-1185">Reference proteome</keyword>
<keyword id="KW-0808">Transferase</keyword>
<organism>
    <name type="scientific">Bordetella pertussis (strain Tohama I / ATCC BAA-589 / NCTC 13251)</name>
    <dbReference type="NCBI Taxonomy" id="257313"/>
    <lineage>
        <taxon>Bacteria</taxon>
        <taxon>Pseudomonadati</taxon>
        <taxon>Pseudomonadota</taxon>
        <taxon>Betaproteobacteria</taxon>
        <taxon>Burkholderiales</taxon>
        <taxon>Alcaligenaceae</taxon>
        <taxon>Bordetella</taxon>
    </lineage>
</organism>
<dbReference type="EC" id="2.7.8.7" evidence="1"/>
<dbReference type="EMBL" id="BX640417">
    <property type="protein sequence ID" value="CAE42357.1"/>
    <property type="molecule type" value="Genomic_DNA"/>
</dbReference>
<dbReference type="RefSeq" id="NP_880741.1">
    <property type="nucleotide sequence ID" value="NC_002929.2"/>
</dbReference>
<dbReference type="RefSeq" id="WP_010930724.1">
    <property type="nucleotide sequence ID" value="NZ_CP039022.1"/>
</dbReference>
<dbReference type="SMR" id="Q7VWV9"/>
<dbReference type="STRING" id="257313.BP2079"/>
<dbReference type="PaxDb" id="257313-BP2079"/>
<dbReference type="GeneID" id="69601848"/>
<dbReference type="KEGG" id="bpe:BP2079"/>
<dbReference type="PATRIC" id="fig|257313.5.peg.2235"/>
<dbReference type="eggNOG" id="COG0736">
    <property type="taxonomic scope" value="Bacteria"/>
</dbReference>
<dbReference type="HOGENOM" id="CLU_089696_3_1_4"/>
<dbReference type="Proteomes" id="UP000002676">
    <property type="component" value="Chromosome"/>
</dbReference>
<dbReference type="GO" id="GO:0005737">
    <property type="term" value="C:cytoplasm"/>
    <property type="evidence" value="ECO:0007669"/>
    <property type="project" value="UniProtKB-SubCell"/>
</dbReference>
<dbReference type="GO" id="GO:0008897">
    <property type="term" value="F:holo-[acyl-carrier-protein] synthase activity"/>
    <property type="evidence" value="ECO:0007669"/>
    <property type="project" value="UniProtKB-UniRule"/>
</dbReference>
<dbReference type="GO" id="GO:0000287">
    <property type="term" value="F:magnesium ion binding"/>
    <property type="evidence" value="ECO:0007669"/>
    <property type="project" value="UniProtKB-UniRule"/>
</dbReference>
<dbReference type="GO" id="GO:0006633">
    <property type="term" value="P:fatty acid biosynthetic process"/>
    <property type="evidence" value="ECO:0007669"/>
    <property type="project" value="UniProtKB-UniRule"/>
</dbReference>
<dbReference type="Gene3D" id="3.90.470.20">
    <property type="entry name" value="4'-phosphopantetheinyl transferase domain"/>
    <property type="match status" value="1"/>
</dbReference>
<dbReference type="HAMAP" id="MF_00101">
    <property type="entry name" value="AcpS"/>
    <property type="match status" value="1"/>
</dbReference>
<dbReference type="InterPro" id="IPR008278">
    <property type="entry name" value="4-PPantetheinyl_Trfase_dom"/>
</dbReference>
<dbReference type="InterPro" id="IPR037143">
    <property type="entry name" value="4-PPantetheinyl_Trfase_dom_sf"/>
</dbReference>
<dbReference type="InterPro" id="IPR002582">
    <property type="entry name" value="ACPS"/>
</dbReference>
<dbReference type="InterPro" id="IPR004568">
    <property type="entry name" value="Ppantetheine-prot_Trfase_dom"/>
</dbReference>
<dbReference type="NCBIfam" id="TIGR00516">
    <property type="entry name" value="acpS"/>
    <property type="match status" value="1"/>
</dbReference>
<dbReference type="NCBIfam" id="TIGR00556">
    <property type="entry name" value="pantethn_trn"/>
    <property type="match status" value="1"/>
</dbReference>
<dbReference type="Pfam" id="PF01648">
    <property type="entry name" value="ACPS"/>
    <property type="match status" value="1"/>
</dbReference>
<dbReference type="SUPFAM" id="SSF56214">
    <property type="entry name" value="4'-phosphopantetheinyl transferase"/>
    <property type="match status" value="1"/>
</dbReference>
<protein>
    <recommendedName>
        <fullName evidence="1">Holo-[acyl-carrier-protein] synthase</fullName>
        <shortName evidence="1">Holo-ACP synthase</shortName>
        <ecNumber evidence="1">2.7.8.7</ecNumber>
    </recommendedName>
    <alternativeName>
        <fullName evidence="1">4'-phosphopantetheinyl transferase AcpS</fullName>
    </alternativeName>
</protein>
<sequence>MSSVSAAGATPPASPGCIAGIGMDLLRIERIERALARHGDRFAQKILGPKELAKFQARRRRDPARGVRFLATRFAAKEAFSKAIGLGMRMPMSWRRVQTLNAPGGRPVLVIGAELADWFDARFGAAHVSITDESDMAAAYVIVERKPAPDGRP</sequence>
<comment type="function">
    <text evidence="1">Transfers the 4'-phosphopantetheine moiety from coenzyme A to a Ser of acyl-carrier-protein.</text>
</comment>
<comment type="catalytic activity">
    <reaction evidence="1">
        <text>apo-[ACP] + CoA = holo-[ACP] + adenosine 3',5'-bisphosphate + H(+)</text>
        <dbReference type="Rhea" id="RHEA:12068"/>
        <dbReference type="Rhea" id="RHEA-COMP:9685"/>
        <dbReference type="Rhea" id="RHEA-COMP:9690"/>
        <dbReference type="ChEBI" id="CHEBI:15378"/>
        <dbReference type="ChEBI" id="CHEBI:29999"/>
        <dbReference type="ChEBI" id="CHEBI:57287"/>
        <dbReference type="ChEBI" id="CHEBI:58343"/>
        <dbReference type="ChEBI" id="CHEBI:64479"/>
        <dbReference type="EC" id="2.7.8.7"/>
    </reaction>
</comment>
<comment type="cofactor">
    <cofactor evidence="1">
        <name>Mg(2+)</name>
        <dbReference type="ChEBI" id="CHEBI:18420"/>
    </cofactor>
</comment>
<comment type="subcellular location">
    <subcellularLocation>
        <location evidence="1">Cytoplasm</location>
    </subcellularLocation>
</comment>
<comment type="similarity">
    <text evidence="1">Belongs to the P-Pant transferase superfamily. AcpS family.</text>
</comment>
<reference key="1">
    <citation type="journal article" date="2003" name="Nat. Genet.">
        <title>Comparative analysis of the genome sequences of Bordetella pertussis, Bordetella parapertussis and Bordetella bronchiseptica.</title>
        <authorList>
            <person name="Parkhill J."/>
            <person name="Sebaihia M."/>
            <person name="Preston A."/>
            <person name="Murphy L.D."/>
            <person name="Thomson N.R."/>
            <person name="Harris D.E."/>
            <person name="Holden M.T.G."/>
            <person name="Churcher C.M."/>
            <person name="Bentley S.D."/>
            <person name="Mungall K.L."/>
            <person name="Cerdeno-Tarraga A.-M."/>
            <person name="Temple L."/>
            <person name="James K.D."/>
            <person name="Harris B."/>
            <person name="Quail M.A."/>
            <person name="Achtman M."/>
            <person name="Atkin R."/>
            <person name="Baker S."/>
            <person name="Basham D."/>
            <person name="Bason N."/>
            <person name="Cherevach I."/>
            <person name="Chillingworth T."/>
            <person name="Collins M."/>
            <person name="Cronin A."/>
            <person name="Davis P."/>
            <person name="Doggett J."/>
            <person name="Feltwell T."/>
            <person name="Goble A."/>
            <person name="Hamlin N."/>
            <person name="Hauser H."/>
            <person name="Holroyd S."/>
            <person name="Jagels K."/>
            <person name="Leather S."/>
            <person name="Moule S."/>
            <person name="Norberczak H."/>
            <person name="O'Neil S."/>
            <person name="Ormond D."/>
            <person name="Price C."/>
            <person name="Rabbinowitsch E."/>
            <person name="Rutter S."/>
            <person name="Sanders M."/>
            <person name="Saunders D."/>
            <person name="Seeger K."/>
            <person name="Sharp S."/>
            <person name="Simmonds M."/>
            <person name="Skelton J."/>
            <person name="Squares R."/>
            <person name="Squares S."/>
            <person name="Stevens K."/>
            <person name="Unwin L."/>
            <person name="Whitehead S."/>
            <person name="Barrell B.G."/>
            <person name="Maskell D.J."/>
        </authorList>
    </citation>
    <scope>NUCLEOTIDE SEQUENCE [LARGE SCALE GENOMIC DNA]</scope>
    <source>
        <strain>Tohama I / ATCC BAA-589 / NCTC 13251</strain>
    </source>
</reference>
<evidence type="ECO:0000255" key="1">
    <source>
        <dbReference type="HAMAP-Rule" id="MF_00101"/>
    </source>
</evidence>
<feature type="chain" id="PRO_0000228273" description="Holo-[acyl-carrier-protein] synthase">
    <location>
        <begin position="1"/>
        <end position="153"/>
    </location>
</feature>
<feature type="binding site" evidence="1">
    <location>
        <position position="24"/>
    </location>
    <ligand>
        <name>Mg(2+)</name>
        <dbReference type="ChEBI" id="CHEBI:18420"/>
    </ligand>
</feature>
<feature type="binding site" evidence="1">
    <location>
        <position position="78"/>
    </location>
    <ligand>
        <name>Mg(2+)</name>
        <dbReference type="ChEBI" id="CHEBI:18420"/>
    </ligand>
</feature>
<proteinExistence type="inferred from homology"/>
<accession>Q7VWV9</accession>
<name>ACPS_BORPE</name>
<gene>
    <name evidence="1" type="primary">acpS</name>
    <name type="ordered locus">BP2079</name>
</gene>